<protein>
    <recommendedName>
        <fullName evidence="1">Glycine--tRNA ligase beta subunit</fullName>
        <ecNumber evidence="1">6.1.1.14</ecNumber>
    </recommendedName>
    <alternativeName>
        <fullName evidence="1">Glycyl-tRNA synthetase beta subunit</fullName>
        <shortName evidence="1">GlyRS</shortName>
    </alternativeName>
</protein>
<sequence>MSELLLELFSEEIPAFMQKNAEEGYLNIFTKIFEENEIFAKVQVFVGPRRITLHATHLPKITLPKEEEIKGPSIEAPEAAINGFCKAHNVSKLELPTKLISNQLYYFFVKKTEEREIKEILPEIIIEAINKYSWAKSMFWGDYKIKWIRPLRNILCIFDGEILPMQFGHLTANNITYGHRLTDNKKLEVTDFEDYRNKLLENHVILERAKREAIIKTGLLELASSHELIIKEDNRLVEEVVGLSEFPVVLLGKIPQKFLELPKEVLISSMRTHQKYFCLFDKTGNFTPYFLFVSNGRFTNAELVIQGNEKVLSARLSDALYFCKQDIAKTLESRLGQLEAVTFHAKLGNLREKIERITDICNYIAPNNKDLITAARLCKSDLVSEMVGEFPDLQGIMGYYYAKHEGLNAEIAAAIRDHYKPQGLSDNLPSGNAALLALADKLDSLVGLMIAGETPTGSGDPYALRRQALGIIRIILENKLELNFNDLINFSINLYKDSSDENKNLIISFFEERAKFYFKNDYDIALINAVLDLNLVDTNFKLDALKEFLIEDAGKQLLNAYKRASNIIGDQKITGLVDASLFSTQPEKELFEVIQKISPQIIDSIADKDYKKALNLLSSLLTPITSFFDNVLVNDSDPKIAQNRLSLLQNICELFDKVAKFNRL</sequence>
<comment type="catalytic activity">
    <reaction evidence="1">
        <text>tRNA(Gly) + glycine + ATP = glycyl-tRNA(Gly) + AMP + diphosphate</text>
        <dbReference type="Rhea" id="RHEA:16013"/>
        <dbReference type="Rhea" id="RHEA-COMP:9664"/>
        <dbReference type="Rhea" id="RHEA-COMP:9683"/>
        <dbReference type="ChEBI" id="CHEBI:30616"/>
        <dbReference type="ChEBI" id="CHEBI:33019"/>
        <dbReference type="ChEBI" id="CHEBI:57305"/>
        <dbReference type="ChEBI" id="CHEBI:78442"/>
        <dbReference type="ChEBI" id="CHEBI:78522"/>
        <dbReference type="ChEBI" id="CHEBI:456215"/>
        <dbReference type="EC" id="6.1.1.14"/>
    </reaction>
</comment>
<comment type="subunit">
    <text evidence="1">Tetramer of two alpha and two beta subunits.</text>
</comment>
<comment type="subcellular location">
    <subcellularLocation>
        <location evidence="1">Cytoplasm</location>
    </subcellularLocation>
</comment>
<comment type="similarity">
    <text evidence="1">Belongs to the class-II aminoacyl-tRNA synthetase family.</text>
</comment>
<comment type="sequence caution" evidence="2">
    <conflict type="erroneous initiation">
        <sequence resource="EMBL-CDS" id="AAL03854"/>
    </conflict>
</comment>
<organism>
    <name type="scientific">Rickettsia conorii (strain ATCC VR-613 / Malish 7)</name>
    <dbReference type="NCBI Taxonomy" id="272944"/>
    <lineage>
        <taxon>Bacteria</taxon>
        <taxon>Pseudomonadati</taxon>
        <taxon>Pseudomonadota</taxon>
        <taxon>Alphaproteobacteria</taxon>
        <taxon>Rickettsiales</taxon>
        <taxon>Rickettsiaceae</taxon>
        <taxon>Rickettsieae</taxon>
        <taxon>Rickettsia</taxon>
        <taxon>spotted fever group</taxon>
    </lineage>
</organism>
<name>SYGB_RICCN</name>
<evidence type="ECO:0000255" key="1">
    <source>
        <dbReference type="HAMAP-Rule" id="MF_00255"/>
    </source>
</evidence>
<evidence type="ECO:0000305" key="2"/>
<gene>
    <name evidence="1" type="primary">glyS</name>
    <name type="ordered locus">RC1316</name>
</gene>
<reference key="1">
    <citation type="journal article" date="2001" name="Science">
        <title>Mechanisms of evolution in Rickettsia conorii and R. prowazekii.</title>
        <authorList>
            <person name="Ogata H."/>
            <person name="Audic S."/>
            <person name="Renesto-Audiffren P."/>
            <person name="Fournier P.-E."/>
            <person name="Barbe V."/>
            <person name="Samson D."/>
            <person name="Roux V."/>
            <person name="Cossart P."/>
            <person name="Weissenbach J."/>
            <person name="Claverie J.-M."/>
            <person name="Raoult D."/>
        </authorList>
    </citation>
    <scope>NUCLEOTIDE SEQUENCE [LARGE SCALE GENOMIC DNA]</scope>
    <source>
        <strain>ATCC VR-613 / Malish 7</strain>
    </source>
</reference>
<accession>Q92G11</accession>
<feature type="chain" id="PRO_0000072923" description="Glycine--tRNA ligase beta subunit">
    <location>
        <begin position="1"/>
        <end position="664"/>
    </location>
</feature>
<keyword id="KW-0030">Aminoacyl-tRNA synthetase</keyword>
<keyword id="KW-0067">ATP-binding</keyword>
<keyword id="KW-0963">Cytoplasm</keyword>
<keyword id="KW-0436">Ligase</keyword>
<keyword id="KW-0547">Nucleotide-binding</keyword>
<keyword id="KW-0648">Protein biosynthesis</keyword>
<proteinExistence type="inferred from homology"/>
<dbReference type="EC" id="6.1.1.14" evidence="1"/>
<dbReference type="EMBL" id="AE006914">
    <property type="protein sequence ID" value="AAL03854.1"/>
    <property type="status" value="ALT_INIT"/>
    <property type="molecule type" value="Genomic_DNA"/>
</dbReference>
<dbReference type="PIR" id="D97864">
    <property type="entry name" value="D97864"/>
</dbReference>
<dbReference type="RefSeq" id="WP_010977873.1">
    <property type="nucleotide sequence ID" value="NC_003103.1"/>
</dbReference>
<dbReference type="SMR" id="Q92G11"/>
<dbReference type="GeneID" id="928469"/>
<dbReference type="KEGG" id="rco:RC1316"/>
<dbReference type="PATRIC" id="fig|272944.4.peg.1510"/>
<dbReference type="HOGENOM" id="CLU_007220_2_1_5"/>
<dbReference type="Proteomes" id="UP000000816">
    <property type="component" value="Chromosome"/>
</dbReference>
<dbReference type="GO" id="GO:0005829">
    <property type="term" value="C:cytosol"/>
    <property type="evidence" value="ECO:0007669"/>
    <property type="project" value="TreeGrafter"/>
</dbReference>
<dbReference type="GO" id="GO:0004814">
    <property type="term" value="F:arginine-tRNA ligase activity"/>
    <property type="evidence" value="ECO:0007669"/>
    <property type="project" value="InterPro"/>
</dbReference>
<dbReference type="GO" id="GO:0005524">
    <property type="term" value="F:ATP binding"/>
    <property type="evidence" value="ECO:0007669"/>
    <property type="project" value="UniProtKB-UniRule"/>
</dbReference>
<dbReference type="GO" id="GO:0004820">
    <property type="term" value="F:glycine-tRNA ligase activity"/>
    <property type="evidence" value="ECO:0007669"/>
    <property type="project" value="UniProtKB-UniRule"/>
</dbReference>
<dbReference type="GO" id="GO:0006420">
    <property type="term" value="P:arginyl-tRNA aminoacylation"/>
    <property type="evidence" value="ECO:0007669"/>
    <property type="project" value="InterPro"/>
</dbReference>
<dbReference type="GO" id="GO:0006426">
    <property type="term" value="P:glycyl-tRNA aminoacylation"/>
    <property type="evidence" value="ECO:0007669"/>
    <property type="project" value="UniProtKB-UniRule"/>
</dbReference>
<dbReference type="HAMAP" id="MF_00255">
    <property type="entry name" value="Gly_tRNA_synth_beta"/>
    <property type="match status" value="1"/>
</dbReference>
<dbReference type="InterPro" id="IPR008909">
    <property type="entry name" value="DALR_anticod-bd"/>
</dbReference>
<dbReference type="InterPro" id="IPR015944">
    <property type="entry name" value="Gly-tRNA-synth_bsu"/>
</dbReference>
<dbReference type="InterPro" id="IPR006194">
    <property type="entry name" value="Gly-tRNA-synth_heterodimer"/>
</dbReference>
<dbReference type="NCBIfam" id="TIGR00211">
    <property type="entry name" value="glyS"/>
    <property type="match status" value="1"/>
</dbReference>
<dbReference type="PANTHER" id="PTHR30075:SF2">
    <property type="entry name" value="GLYCINE--TRNA LIGASE, CHLOROPLASTIC_MITOCHONDRIAL 2"/>
    <property type="match status" value="1"/>
</dbReference>
<dbReference type="PANTHER" id="PTHR30075">
    <property type="entry name" value="GLYCYL-TRNA SYNTHETASE"/>
    <property type="match status" value="1"/>
</dbReference>
<dbReference type="Pfam" id="PF05746">
    <property type="entry name" value="DALR_1"/>
    <property type="match status" value="1"/>
</dbReference>
<dbReference type="Pfam" id="PF02092">
    <property type="entry name" value="tRNA_synt_2f"/>
    <property type="match status" value="1"/>
</dbReference>
<dbReference type="PRINTS" id="PR01045">
    <property type="entry name" value="TRNASYNTHGB"/>
</dbReference>
<dbReference type="SUPFAM" id="SSF109604">
    <property type="entry name" value="HD-domain/PDEase-like"/>
    <property type="match status" value="1"/>
</dbReference>
<dbReference type="PROSITE" id="PS50861">
    <property type="entry name" value="AA_TRNA_LIGASE_II_GLYAB"/>
    <property type="match status" value="1"/>
</dbReference>